<comment type="catalytic activity">
    <reaction evidence="1">
        <text>CMP + ATP = CDP + ADP</text>
        <dbReference type="Rhea" id="RHEA:11600"/>
        <dbReference type="ChEBI" id="CHEBI:30616"/>
        <dbReference type="ChEBI" id="CHEBI:58069"/>
        <dbReference type="ChEBI" id="CHEBI:60377"/>
        <dbReference type="ChEBI" id="CHEBI:456216"/>
        <dbReference type="EC" id="2.7.4.25"/>
    </reaction>
</comment>
<comment type="catalytic activity">
    <reaction evidence="1">
        <text>dCMP + ATP = dCDP + ADP</text>
        <dbReference type="Rhea" id="RHEA:25094"/>
        <dbReference type="ChEBI" id="CHEBI:30616"/>
        <dbReference type="ChEBI" id="CHEBI:57566"/>
        <dbReference type="ChEBI" id="CHEBI:58593"/>
        <dbReference type="ChEBI" id="CHEBI:456216"/>
        <dbReference type="EC" id="2.7.4.25"/>
    </reaction>
</comment>
<comment type="subcellular location">
    <subcellularLocation>
        <location evidence="1">Cytoplasm</location>
    </subcellularLocation>
</comment>
<comment type="similarity">
    <text evidence="1">Belongs to the cytidylate kinase family. Type 1 subfamily.</text>
</comment>
<proteinExistence type="inferred from homology"/>
<name>KCY_RHOPB</name>
<organism>
    <name type="scientific">Rhodopseudomonas palustris (strain BisB18)</name>
    <dbReference type="NCBI Taxonomy" id="316056"/>
    <lineage>
        <taxon>Bacteria</taxon>
        <taxon>Pseudomonadati</taxon>
        <taxon>Pseudomonadota</taxon>
        <taxon>Alphaproteobacteria</taxon>
        <taxon>Hyphomicrobiales</taxon>
        <taxon>Nitrobacteraceae</taxon>
        <taxon>Rhodopseudomonas</taxon>
    </lineage>
</organism>
<protein>
    <recommendedName>
        <fullName evidence="1">Cytidylate kinase</fullName>
        <shortName evidence="1">CK</shortName>
        <ecNumber evidence="1">2.7.4.25</ecNumber>
    </recommendedName>
    <alternativeName>
        <fullName evidence="1">Cytidine monophosphate kinase</fullName>
        <shortName evidence="1">CMP kinase</shortName>
    </alternativeName>
</protein>
<reference key="1">
    <citation type="submission" date="2006-03" db="EMBL/GenBank/DDBJ databases">
        <title>Complete sequence of Rhodopseudomonas palustris BisB18.</title>
        <authorList>
            <consortium name="US DOE Joint Genome Institute"/>
            <person name="Copeland A."/>
            <person name="Lucas S."/>
            <person name="Lapidus A."/>
            <person name="Barry K."/>
            <person name="Detter J.C."/>
            <person name="Glavina del Rio T."/>
            <person name="Hammon N."/>
            <person name="Israni S."/>
            <person name="Dalin E."/>
            <person name="Tice H."/>
            <person name="Pitluck S."/>
            <person name="Chain P."/>
            <person name="Malfatti S."/>
            <person name="Shin M."/>
            <person name="Vergez L."/>
            <person name="Schmutz J."/>
            <person name="Larimer F."/>
            <person name="Land M."/>
            <person name="Hauser L."/>
            <person name="Pelletier D.A."/>
            <person name="Kyrpides N."/>
            <person name="Anderson I."/>
            <person name="Oda Y."/>
            <person name="Harwood C.S."/>
            <person name="Richardson P."/>
        </authorList>
    </citation>
    <scope>NUCLEOTIDE SEQUENCE [LARGE SCALE GENOMIC DNA]</scope>
    <source>
        <strain>BisB18</strain>
    </source>
</reference>
<sequence length="212" mass="22392">MIIAIDGPAASGKGTLGKRLAAHYGYRHLDTGVIYRAVAKALLDQGAELTDETRAVAAAEALDPDTFADPALKSQTVGEAASVVSALPRVRAALLNFQRQFAAHPPGAVLDGRDIGTVICPEADVKIFVVADASVRAHRRTLEALARGEPADEAQVLADILKRDERDKSRAAAPLKAADDAHLLDNSHLDIESGVRAAIDIVEAVRAGRQRV</sequence>
<feature type="chain" id="PRO_1000048261" description="Cytidylate kinase">
    <location>
        <begin position="1"/>
        <end position="212"/>
    </location>
</feature>
<feature type="binding site" evidence="1">
    <location>
        <begin position="7"/>
        <end position="15"/>
    </location>
    <ligand>
        <name>ATP</name>
        <dbReference type="ChEBI" id="CHEBI:30616"/>
    </ligand>
</feature>
<accession>Q21CB3</accession>
<evidence type="ECO:0000255" key="1">
    <source>
        <dbReference type="HAMAP-Rule" id="MF_00238"/>
    </source>
</evidence>
<dbReference type="EC" id="2.7.4.25" evidence="1"/>
<dbReference type="EMBL" id="CP000301">
    <property type="protein sequence ID" value="ABD85973.1"/>
    <property type="molecule type" value="Genomic_DNA"/>
</dbReference>
<dbReference type="SMR" id="Q21CB3"/>
<dbReference type="STRING" id="316056.RPC_0398"/>
<dbReference type="KEGG" id="rpc:RPC_0398"/>
<dbReference type="eggNOG" id="COG0283">
    <property type="taxonomic scope" value="Bacteria"/>
</dbReference>
<dbReference type="HOGENOM" id="CLU_079959_0_1_5"/>
<dbReference type="OrthoDB" id="9807434at2"/>
<dbReference type="GO" id="GO:0005737">
    <property type="term" value="C:cytoplasm"/>
    <property type="evidence" value="ECO:0007669"/>
    <property type="project" value="UniProtKB-SubCell"/>
</dbReference>
<dbReference type="GO" id="GO:0005524">
    <property type="term" value="F:ATP binding"/>
    <property type="evidence" value="ECO:0007669"/>
    <property type="project" value="UniProtKB-UniRule"/>
</dbReference>
<dbReference type="GO" id="GO:0036430">
    <property type="term" value="F:CMP kinase activity"/>
    <property type="evidence" value="ECO:0007669"/>
    <property type="project" value="RHEA"/>
</dbReference>
<dbReference type="GO" id="GO:0036431">
    <property type="term" value="F:dCMP kinase activity"/>
    <property type="evidence" value="ECO:0007669"/>
    <property type="project" value="RHEA"/>
</dbReference>
<dbReference type="GO" id="GO:0006220">
    <property type="term" value="P:pyrimidine nucleotide metabolic process"/>
    <property type="evidence" value="ECO:0007669"/>
    <property type="project" value="UniProtKB-UniRule"/>
</dbReference>
<dbReference type="CDD" id="cd02020">
    <property type="entry name" value="CMPK"/>
    <property type="match status" value="1"/>
</dbReference>
<dbReference type="Gene3D" id="3.40.50.300">
    <property type="entry name" value="P-loop containing nucleotide triphosphate hydrolases"/>
    <property type="match status" value="1"/>
</dbReference>
<dbReference type="HAMAP" id="MF_00238">
    <property type="entry name" value="Cytidyl_kinase_type1"/>
    <property type="match status" value="1"/>
</dbReference>
<dbReference type="InterPro" id="IPR003136">
    <property type="entry name" value="Cytidylate_kin"/>
</dbReference>
<dbReference type="InterPro" id="IPR011994">
    <property type="entry name" value="Cytidylate_kinase_dom"/>
</dbReference>
<dbReference type="InterPro" id="IPR027417">
    <property type="entry name" value="P-loop_NTPase"/>
</dbReference>
<dbReference type="NCBIfam" id="TIGR00017">
    <property type="entry name" value="cmk"/>
    <property type="match status" value="1"/>
</dbReference>
<dbReference type="Pfam" id="PF02224">
    <property type="entry name" value="Cytidylate_kin"/>
    <property type="match status" value="1"/>
</dbReference>
<dbReference type="SUPFAM" id="SSF52540">
    <property type="entry name" value="P-loop containing nucleoside triphosphate hydrolases"/>
    <property type="match status" value="1"/>
</dbReference>
<keyword id="KW-0067">ATP-binding</keyword>
<keyword id="KW-0963">Cytoplasm</keyword>
<keyword id="KW-0418">Kinase</keyword>
<keyword id="KW-0547">Nucleotide-binding</keyword>
<keyword id="KW-0808">Transferase</keyword>
<gene>
    <name evidence="1" type="primary">cmk</name>
    <name type="ordered locus">RPC_0398</name>
</gene>